<dbReference type="EMBL" id="BK006946">
    <property type="protein sequence ID" value="DAA35127.1"/>
    <property type="molecule type" value="Genomic_DNA"/>
</dbReference>
<dbReference type="RefSeq" id="NP_001257686.1">
    <property type="nucleotide sequence ID" value="NM_001270757.1"/>
</dbReference>
<dbReference type="SMR" id="I2HB70"/>
<dbReference type="BioGRID" id="300829">
    <property type="interactions" value="31"/>
</dbReference>
<dbReference type="FunCoup" id="I2HB70">
    <property type="interactions" value="37"/>
</dbReference>
<dbReference type="PaxDb" id="4932-YMR316C-A"/>
<dbReference type="EnsemblFungi" id="YMR316C-A_mRNA">
    <property type="protein sequence ID" value="YMR316C-A"/>
    <property type="gene ID" value="YMR316C-A"/>
</dbReference>
<dbReference type="GeneID" id="855365"/>
<dbReference type="KEGG" id="sce:YMR316C-A"/>
<dbReference type="AGR" id="SGD:S000004933"/>
<dbReference type="SGD" id="S000004933">
    <property type="gene designation" value="YMR316C-A"/>
</dbReference>
<dbReference type="VEuPathDB" id="FungiDB:YMR316C-A"/>
<dbReference type="HOGENOM" id="CLU_2265824_0_0_1"/>
<dbReference type="InParanoid" id="I2HB70"/>
<dbReference type="BioCyc" id="YEAST:G3O-32980-MONOMER"/>
<dbReference type="BioGRID-ORCS" id="855365">
    <property type="hits" value="0 hits in 10 CRISPR screens"/>
</dbReference>
<dbReference type="PRO" id="PR:I2HB70"/>
<dbReference type="Proteomes" id="UP000002311">
    <property type="component" value="Chromosome XIII"/>
</dbReference>
<dbReference type="RNAct" id="I2HB70">
    <property type="molecule type" value="protein"/>
</dbReference>
<dbReference type="GO" id="GO:0005783">
    <property type="term" value="C:endoplasmic reticulum"/>
    <property type="evidence" value="ECO:0007005"/>
    <property type="project" value="SGD"/>
</dbReference>
<evidence type="ECO:0000255" key="1"/>
<sequence length="103" mass="12411">MTGFKVSSFFYILALSRFFNAGRERACDKLKITVTHLYWFIIRKLLLHEVHVHVSRVCNVSFILSPCLFRNFFTLSLHVLYVMYEQALTPEFFRQWWDIIQSK</sequence>
<name>YM16A_YEAST</name>
<reference key="1">
    <citation type="journal article" date="1997" name="Nature">
        <title>The nucleotide sequence of Saccharomyces cerevisiae chromosome XIII.</title>
        <authorList>
            <person name="Bowman S."/>
            <person name="Churcher C.M."/>
            <person name="Badcock K."/>
            <person name="Brown D."/>
            <person name="Chillingworth T."/>
            <person name="Connor R."/>
            <person name="Dedman K."/>
            <person name="Devlin K."/>
            <person name="Gentles S."/>
            <person name="Hamlin N."/>
            <person name="Hunt S."/>
            <person name="Jagels K."/>
            <person name="Lye G."/>
            <person name="Moule S."/>
            <person name="Odell C."/>
            <person name="Pearson D."/>
            <person name="Rajandream M.A."/>
            <person name="Rice P."/>
            <person name="Skelton J."/>
            <person name="Walsh S.V."/>
            <person name="Whitehead S."/>
            <person name="Barrell B.G."/>
        </authorList>
    </citation>
    <scope>NUCLEOTIDE SEQUENCE [LARGE SCALE GENOMIC DNA]</scope>
    <source>
        <strain>ATCC 204508 / S288c</strain>
    </source>
</reference>
<reference key="2">
    <citation type="journal article" date="2014" name="G3 (Bethesda)">
        <title>The reference genome sequence of Saccharomyces cerevisiae: Then and now.</title>
        <authorList>
            <person name="Engel S.R."/>
            <person name="Dietrich F.S."/>
            <person name="Fisk D.G."/>
            <person name="Binkley G."/>
            <person name="Balakrishnan R."/>
            <person name="Costanzo M.C."/>
            <person name="Dwight S.S."/>
            <person name="Hitz B.C."/>
            <person name="Karra K."/>
            <person name="Nash R.S."/>
            <person name="Weng S."/>
            <person name="Wong E.D."/>
            <person name="Lloyd P."/>
            <person name="Skrzypek M.S."/>
            <person name="Miyasato S.R."/>
            <person name="Simison M."/>
            <person name="Cherry J.M."/>
        </authorList>
    </citation>
    <scope>GENOME REANNOTATION</scope>
    <source>
        <strain>ATCC 204508 / S288c</strain>
    </source>
</reference>
<reference key="3">
    <citation type="journal article" date="2012" name="Science">
        <title>High-resolution view of the yeast meiotic program revealed by ribosome profiling.</title>
        <authorList>
            <person name="Brar G.A."/>
            <person name="Yassour M."/>
            <person name="Friedman N."/>
            <person name="Regev A."/>
            <person name="Ingolia N.T."/>
            <person name="Weissman J.S."/>
        </authorList>
    </citation>
    <scope>IDENTIFICATION</scope>
</reference>
<organism>
    <name type="scientific">Saccharomyces cerevisiae (strain ATCC 204508 / S288c)</name>
    <name type="common">Baker's yeast</name>
    <dbReference type="NCBI Taxonomy" id="559292"/>
    <lineage>
        <taxon>Eukaryota</taxon>
        <taxon>Fungi</taxon>
        <taxon>Dikarya</taxon>
        <taxon>Ascomycota</taxon>
        <taxon>Saccharomycotina</taxon>
        <taxon>Saccharomycetes</taxon>
        <taxon>Saccharomycetales</taxon>
        <taxon>Saccharomycetaceae</taxon>
        <taxon>Saccharomyces</taxon>
    </lineage>
</organism>
<feature type="signal peptide" evidence="1">
    <location>
        <begin position="1"/>
        <end position="21"/>
    </location>
</feature>
<feature type="chain" id="PRO_0000419188" description="Uncharacterized protein YMR316C-A">
    <location>
        <begin position="22"/>
        <end position="103"/>
    </location>
</feature>
<accession>I2HB70</accession>
<proteinExistence type="inferred from homology"/>
<gene>
    <name type="ordered locus">YMR316C-A</name>
</gene>
<protein>
    <recommendedName>
        <fullName>Uncharacterized protein YMR316C-A</fullName>
    </recommendedName>
</protein>
<keyword id="KW-1185">Reference proteome</keyword>
<keyword id="KW-0732">Signal</keyword>